<accession>A2C4Z9</accession>
<protein>
    <recommendedName>
        <fullName evidence="1">Large ribosomal subunit protein uL3</fullName>
    </recommendedName>
    <alternativeName>
        <fullName evidence="3">50S ribosomal protein L3</fullName>
    </alternativeName>
</protein>
<organism>
    <name type="scientific">Prochlorococcus marinus (strain NATL1A)</name>
    <dbReference type="NCBI Taxonomy" id="167555"/>
    <lineage>
        <taxon>Bacteria</taxon>
        <taxon>Bacillati</taxon>
        <taxon>Cyanobacteriota</taxon>
        <taxon>Cyanophyceae</taxon>
        <taxon>Synechococcales</taxon>
        <taxon>Prochlorococcaceae</taxon>
        <taxon>Prochlorococcus</taxon>
    </lineage>
</organism>
<comment type="function">
    <text evidence="1">One of the primary rRNA binding proteins, it binds directly near the 3'-end of the 23S rRNA, where it nucleates assembly of the 50S subunit.</text>
</comment>
<comment type="subunit">
    <text evidence="1">Part of the 50S ribosomal subunit. Forms a cluster with proteins L14 and L19.</text>
</comment>
<comment type="similarity">
    <text evidence="1">Belongs to the universal ribosomal protein uL3 family.</text>
</comment>
<feature type="chain" id="PRO_1000052107" description="Large ribosomal subunit protein uL3">
    <location>
        <begin position="1"/>
        <end position="218"/>
    </location>
</feature>
<feature type="region of interest" description="Disordered" evidence="2">
    <location>
        <begin position="127"/>
        <end position="167"/>
    </location>
</feature>
<sequence length="218" mass="23401">MSLGILGKKLGMSQLFDDQGRAVPVTLIEAGPCRITQLKSADTDGYAAVQIGFQLIREKLINKPSKGHLAKSGNDLLRHLREYRVENSSEFELGASITVDDFEKGQKVDVSGDTMGRGFAGYQKRHGFSRGPMSHGSKNHRLPGSIGAGTTPGRVYPGKRMAGRMGGKKVTTRALEILKIDTNHNLLVVKGSVPGKPGSLLNIRPAKRVGVSIQQGGE</sequence>
<gene>
    <name evidence="1" type="primary">rplC</name>
    <name evidence="1" type="synonym">rpl3</name>
    <name type="ordered locus">NATL1_20031</name>
</gene>
<proteinExistence type="inferred from homology"/>
<evidence type="ECO:0000255" key="1">
    <source>
        <dbReference type="HAMAP-Rule" id="MF_01325"/>
    </source>
</evidence>
<evidence type="ECO:0000256" key="2">
    <source>
        <dbReference type="SAM" id="MobiDB-lite"/>
    </source>
</evidence>
<evidence type="ECO:0000305" key="3"/>
<reference key="1">
    <citation type="journal article" date="2007" name="PLoS Genet.">
        <title>Patterns and implications of gene gain and loss in the evolution of Prochlorococcus.</title>
        <authorList>
            <person name="Kettler G.C."/>
            <person name="Martiny A.C."/>
            <person name="Huang K."/>
            <person name="Zucker J."/>
            <person name="Coleman M.L."/>
            <person name="Rodrigue S."/>
            <person name="Chen F."/>
            <person name="Lapidus A."/>
            <person name="Ferriera S."/>
            <person name="Johnson J."/>
            <person name="Steglich C."/>
            <person name="Church G.M."/>
            <person name="Richardson P."/>
            <person name="Chisholm S.W."/>
        </authorList>
    </citation>
    <scope>NUCLEOTIDE SEQUENCE [LARGE SCALE GENOMIC DNA]</scope>
    <source>
        <strain>NATL1A</strain>
    </source>
</reference>
<name>RL3_PROM1</name>
<keyword id="KW-0687">Ribonucleoprotein</keyword>
<keyword id="KW-0689">Ribosomal protein</keyword>
<keyword id="KW-0694">RNA-binding</keyword>
<keyword id="KW-0699">rRNA-binding</keyword>
<dbReference type="EMBL" id="CP000553">
    <property type="protein sequence ID" value="ABM76559.1"/>
    <property type="molecule type" value="Genomic_DNA"/>
</dbReference>
<dbReference type="RefSeq" id="WP_011824514.1">
    <property type="nucleotide sequence ID" value="NC_008819.1"/>
</dbReference>
<dbReference type="SMR" id="A2C4Z9"/>
<dbReference type="KEGG" id="pme:NATL1_20031"/>
<dbReference type="eggNOG" id="COG0087">
    <property type="taxonomic scope" value="Bacteria"/>
</dbReference>
<dbReference type="HOGENOM" id="CLU_044142_4_1_3"/>
<dbReference type="Proteomes" id="UP000002592">
    <property type="component" value="Chromosome"/>
</dbReference>
<dbReference type="GO" id="GO:0022625">
    <property type="term" value="C:cytosolic large ribosomal subunit"/>
    <property type="evidence" value="ECO:0007669"/>
    <property type="project" value="TreeGrafter"/>
</dbReference>
<dbReference type="GO" id="GO:0019843">
    <property type="term" value="F:rRNA binding"/>
    <property type="evidence" value="ECO:0007669"/>
    <property type="project" value="UniProtKB-UniRule"/>
</dbReference>
<dbReference type="GO" id="GO:0003735">
    <property type="term" value="F:structural constituent of ribosome"/>
    <property type="evidence" value="ECO:0007669"/>
    <property type="project" value="InterPro"/>
</dbReference>
<dbReference type="GO" id="GO:0006412">
    <property type="term" value="P:translation"/>
    <property type="evidence" value="ECO:0007669"/>
    <property type="project" value="UniProtKB-UniRule"/>
</dbReference>
<dbReference type="FunFam" id="3.30.160.810:FF:000001">
    <property type="entry name" value="50S ribosomal protein L3"/>
    <property type="match status" value="1"/>
</dbReference>
<dbReference type="FunFam" id="2.40.30.10:FF:000065">
    <property type="entry name" value="50S ribosomal protein L3, chloroplastic"/>
    <property type="match status" value="1"/>
</dbReference>
<dbReference type="Gene3D" id="3.30.160.810">
    <property type="match status" value="1"/>
</dbReference>
<dbReference type="Gene3D" id="2.40.30.10">
    <property type="entry name" value="Translation factors"/>
    <property type="match status" value="1"/>
</dbReference>
<dbReference type="HAMAP" id="MF_01325_B">
    <property type="entry name" value="Ribosomal_uL3_B"/>
    <property type="match status" value="1"/>
</dbReference>
<dbReference type="InterPro" id="IPR000597">
    <property type="entry name" value="Ribosomal_uL3"/>
</dbReference>
<dbReference type="InterPro" id="IPR019927">
    <property type="entry name" value="Ribosomal_uL3_bac/org-type"/>
</dbReference>
<dbReference type="InterPro" id="IPR019926">
    <property type="entry name" value="Ribosomal_uL3_CS"/>
</dbReference>
<dbReference type="InterPro" id="IPR009000">
    <property type="entry name" value="Transl_B-barrel_sf"/>
</dbReference>
<dbReference type="NCBIfam" id="TIGR03625">
    <property type="entry name" value="L3_bact"/>
    <property type="match status" value="1"/>
</dbReference>
<dbReference type="PANTHER" id="PTHR11229">
    <property type="entry name" value="50S RIBOSOMAL PROTEIN L3"/>
    <property type="match status" value="1"/>
</dbReference>
<dbReference type="PANTHER" id="PTHR11229:SF16">
    <property type="entry name" value="LARGE RIBOSOMAL SUBUNIT PROTEIN UL3C"/>
    <property type="match status" value="1"/>
</dbReference>
<dbReference type="Pfam" id="PF00297">
    <property type="entry name" value="Ribosomal_L3"/>
    <property type="match status" value="1"/>
</dbReference>
<dbReference type="SUPFAM" id="SSF50447">
    <property type="entry name" value="Translation proteins"/>
    <property type="match status" value="1"/>
</dbReference>
<dbReference type="PROSITE" id="PS00474">
    <property type="entry name" value="RIBOSOMAL_L3"/>
    <property type="match status" value="1"/>
</dbReference>